<name>NPVF_SHEEP</name>
<gene>
    <name evidence="3" type="primary">NPVF</name>
    <name evidence="12" type="synonym">RFRP</name>
</gene>
<evidence type="ECO:0000250" key="1"/>
<evidence type="ECO:0000250" key="2">
    <source>
        <dbReference type="UniProtKB" id="Q9ESQ9"/>
    </source>
</evidence>
<evidence type="ECO:0000250" key="3">
    <source>
        <dbReference type="UniProtKB" id="Q9HCQ7"/>
    </source>
</evidence>
<evidence type="ECO:0000255" key="4"/>
<evidence type="ECO:0000269" key="5">
    <source>
    </source>
</evidence>
<evidence type="ECO:0000269" key="6">
    <source>
    </source>
</evidence>
<evidence type="ECO:0000269" key="7">
    <source>
    </source>
</evidence>
<evidence type="ECO:0000269" key="8">
    <source>
    </source>
</evidence>
<evidence type="ECO:0000303" key="9">
    <source>
    </source>
</evidence>
<evidence type="ECO:0000303" key="10">
    <source>
    </source>
</evidence>
<evidence type="ECO:0000305" key="11"/>
<evidence type="ECO:0000312" key="12">
    <source>
        <dbReference type="EMBL" id="ABS44877.1"/>
    </source>
</evidence>
<evidence type="ECO:0000312" key="13">
    <source>
        <dbReference type="EMBL" id="ABW24663.1"/>
    </source>
</evidence>
<evidence type="ECO:0000312" key="14">
    <source>
        <dbReference type="EMBL" id="ACB87372.1"/>
    </source>
</evidence>
<keyword id="KW-0027">Amidation</keyword>
<keyword id="KW-0165">Cleavage on pair of basic residues</keyword>
<keyword id="KW-0527">Neuropeptide</keyword>
<keyword id="KW-1185">Reference proteome</keyword>
<keyword id="KW-0964">Secreted</keyword>
<keyword id="KW-0732">Signal</keyword>
<reference evidence="11 12" key="1">
    <citation type="journal article" date="2008" name="J. Neuroendocrinol.">
        <title>RFamide-related peptide and its cognate receptor in the sheep: cDNA cloning, mRNA distribution in the hypothalamus and the effect of photoperiod.</title>
        <authorList>
            <person name="Dardente H."/>
            <person name="Birnie M."/>
            <person name="Lincoln G.A."/>
            <person name="Hazlerigg D.G."/>
        </authorList>
    </citation>
    <scope>NUCLEOTIDE SEQUENCE [MRNA]</scope>
    <scope>TISSUE SPECIFICITY</scope>
    <scope>INDUCTION</scope>
</reference>
<reference evidence="11 13" key="2">
    <citation type="journal article" date="2008" name="Endocrinology">
        <title>Variation in kisspeptin and RFamide-related peptide (RFRP) expression and terminal connections to gonadotropin-releasing hormone neurons in the brain: a novel medium for seasonal breeding in the sheep.</title>
        <authorList>
            <person name="Smith J.T."/>
            <person name="Coolen L.M."/>
            <person name="Kriegsfeld L.J."/>
            <person name="Sari I.P."/>
            <person name="Jaafarzadehshirazi M.R."/>
            <person name="Maltby M."/>
            <person name="Bateman K."/>
            <person name="Goodman R.L."/>
            <person name="Tilbrook A.J."/>
            <person name="Ubuka T."/>
            <person name="Bentley G.E."/>
            <person name="Clarke I.J."/>
            <person name="Lehman M.N."/>
        </authorList>
    </citation>
    <scope>NUCLEOTIDE SEQUENCE [MRNA] OF 21-161</scope>
    <scope>FUNCTION</scope>
    <scope>TISSUE SPECIFICITY</scope>
</reference>
<reference evidence="11 14" key="3">
    <citation type="submission" date="2008-03" db="EMBL/GenBank/DDBJ databases">
        <authorList>
            <person name="Arreguin-Arevalo J.A."/>
            <person name="Nett T.M."/>
        </authorList>
    </citation>
    <scope>NUCLEOTIDE SEQUENCE [MRNA] OF 32-183</scope>
    <source>
        <tissue evidence="14">Brain</tissue>
    </source>
</reference>
<reference evidence="11" key="4">
    <citation type="journal article" date="2008" name="Endocrinology">
        <title>Potent action of RFamide-related peptide-3 on pituitary gonadotropes indicative of a hypophysiotropic role in the negative regulation of gonadotropin secretion.</title>
        <authorList>
            <person name="Clarke I.J."/>
            <person name="Sari I.P."/>
            <person name="Qi Y."/>
            <person name="Smith J.T."/>
            <person name="Parkington H.C."/>
            <person name="Ubuka T."/>
            <person name="Iqbal J."/>
            <person name="Li Q."/>
            <person name="Tilbrook A."/>
            <person name="Morgan K."/>
            <person name="Pawson A.J."/>
            <person name="Tsutsui K."/>
            <person name="Millar R.P."/>
            <person name="Bentley G.E."/>
        </authorList>
    </citation>
    <scope>FUNCTION</scope>
    <scope>TISSUE SPECIFICITY</scope>
</reference>
<reference evidence="11" key="5">
    <citation type="journal article" date="2009" name="Endocrinology">
        <title>Effect of RF-amide-related peptide-3 on luteinizing hormone and follicle-stimulating hormone synthesis and secretion in ovine pituitary gonadotropes.</title>
        <authorList>
            <person name="Sari I.P."/>
            <person name="Rao A."/>
            <person name="Smith J.T."/>
            <person name="Tilbrook A.J."/>
            <person name="Clarke I.J."/>
        </authorList>
    </citation>
    <scope>FUNCTION</scope>
</reference>
<organism>
    <name type="scientific">Ovis aries</name>
    <name type="common">Sheep</name>
    <dbReference type="NCBI Taxonomy" id="9940"/>
    <lineage>
        <taxon>Eukaryota</taxon>
        <taxon>Metazoa</taxon>
        <taxon>Chordata</taxon>
        <taxon>Craniata</taxon>
        <taxon>Vertebrata</taxon>
        <taxon>Euteleostomi</taxon>
        <taxon>Mammalia</taxon>
        <taxon>Eutheria</taxon>
        <taxon>Laurasiatheria</taxon>
        <taxon>Artiodactyla</taxon>
        <taxon>Ruminantia</taxon>
        <taxon>Pecora</taxon>
        <taxon>Bovidae</taxon>
        <taxon>Caprinae</taxon>
        <taxon>Ovis</taxon>
    </lineage>
</organism>
<dbReference type="EMBL" id="EF494241">
    <property type="protein sequence ID" value="ABS44877.1"/>
    <property type="molecule type" value="mRNA"/>
</dbReference>
<dbReference type="EMBL" id="EU177779">
    <property type="protein sequence ID" value="ABW24663.1"/>
    <property type="molecule type" value="mRNA"/>
</dbReference>
<dbReference type="EMBL" id="EU580134">
    <property type="protein sequence ID" value="ACB87372.1"/>
    <property type="molecule type" value="mRNA"/>
</dbReference>
<dbReference type="RefSeq" id="NP_001120740.1">
    <property type="nucleotide sequence ID" value="NM_001127268.1"/>
</dbReference>
<dbReference type="STRING" id="9940.ENSOARP00000010970"/>
<dbReference type="PaxDb" id="9940-ENSOARP00000010970"/>
<dbReference type="Ensembl" id="ENSOART00020000641">
    <property type="protein sequence ID" value="ENSOARP00020000506"/>
    <property type="gene ID" value="ENSOARG00020000502"/>
</dbReference>
<dbReference type="Ensembl" id="ENSOART00220073253">
    <property type="protein sequence ID" value="ENSOARP00220039347"/>
    <property type="gene ID" value="ENSOARG00220044147"/>
</dbReference>
<dbReference type="Ensembl" id="ENSOART00225006844">
    <property type="protein sequence ID" value="ENSOARP00225003024"/>
    <property type="gene ID" value="ENSOARG00225004268"/>
</dbReference>
<dbReference type="Ensembl" id="ENSOART00260045508">
    <property type="protein sequence ID" value="ENSOARP00260023284"/>
    <property type="gene ID" value="ENSOARG00260027651"/>
</dbReference>
<dbReference type="GeneID" id="100127217"/>
<dbReference type="KEGG" id="oas:100127217"/>
<dbReference type="CTD" id="64111"/>
<dbReference type="eggNOG" id="ENOG502S5H9">
    <property type="taxonomic scope" value="Eukaryota"/>
</dbReference>
<dbReference type="HOGENOM" id="CLU_120051_0_0_1"/>
<dbReference type="OMA" id="KMPHSVA"/>
<dbReference type="OrthoDB" id="8834619at2759"/>
<dbReference type="Proteomes" id="UP000002356">
    <property type="component" value="Chromosome 4"/>
</dbReference>
<dbReference type="Bgee" id="ENSOARG00000010230">
    <property type="expression patterns" value="Expressed in ovary and 3 other cell types or tissues"/>
</dbReference>
<dbReference type="GO" id="GO:0005615">
    <property type="term" value="C:extracellular space"/>
    <property type="evidence" value="ECO:0007669"/>
    <property type="project" value="Ensembl"/>
</dbReference>
<dbReference type="GO" id="GO:0160041">
    <property type="term" value="F:neuropeptide activity"/>
    <property type="evidence" value="ECO:0007669"/>
    <property type="project" value="Ensembl"/>
</dbReference>
<dbReference type="GO" id="GO:0032277">
    <property type="term" value="P:negative regulation of gonadotropin secretion"/>
    <property type="evidence" value="ECO:0007669"/>
    <property type="project" value="Ensembl"/>
</dbReference>
<dbReference type="GO" id="GO:0007218">
    <property type="term" value="P:neuropeptide signaling pathway"/>
    <property type="evidence" value="ECO:0007669"/>
    <property type="project" value="UniProtKB-KW"/>
</dbReference>
<dbReference type="InterPro" id="IPR026297">
    <property type="entry name" value="FMRFamide-related/fGRP"/>
</dbReference>
<dbReference type="PANTHER" id="PTHR14403:SF6">
    <property type="entry name" value="PRO-FMRFAMIDE-RELATED NEUROPEPTIDE VF"/>
    <property type="match status" value="1"/>
</dbReference>
<dbReference type="PANTHER" id="PTHR14403">
    <property type="entry name" value="RFAMIDE PEPTIDE GONADOTROPIN INHIBITORY HORMONE"/>
    <property type="match status" value="1"/>
</dbReference>
<accession>B2KKR4</accession>
<accession>A8VJ96</accession>
<accession>B2LT47</accession>
<comment type="function">
    <text evidence="5 6 8">May act in concert with kisspeptin, through opposing affects, to regulate the activity of gonadotropin-releasing hormone (GnRH) neurons across the seasons, leading to an annual change in fertility and the cyclical seasonal transition from non-breeding to breeding season.</text>
</comment>
<comment type="function">
    <molecule>Neuropeptide RFRP-1</molecule>
    <text evidence="2 3">Efficiently inhibits forskolin-induced production of cAMP. Acts as a potent negative regulator of gonadotropin synthesis and secretion (By similarity). Induces secretion of prolactin (By similarity).</text>
</comment>
<comment type="function">
    <molecule>Neuropeptide NPVF</molecule>
    <text evidence="3">Efficiently inhibits forskolin-induced production of cAMP. Blocks morphine-induced analgesia.</text>
</comment>
<comment type="function">
    <molecule>Neuropeptide RFRP-2</molecule>
    <text evidence="3">Shows no inhibitory activity of forskolin-induced production of cAMP.</text>
</comment>
<comment type="subcellular location">
    <subcellularLocation>
        <location evidence="3">Secreted</location>
    </subcellularLocation>
</comment>
<comment type="tissue specificity">
    <text evidence="5 6 7">Expressed in hypothalamus, where it is localized to the dorsomedial hypothalamic nucleus (DMH), paraventricular nucleus (PVN), and to neuronal projections from the PVN to the neurosecretory zone of the median eminence.</text>
</comment>
<comment type="induction">
    <text evidence="7">Expression moderately increased by a longer photoperiod.</text>
</comment>
<comment type="similarity">
    <text evidence="4">Belongs to the FARP (FMRFamide related peptide) family.</text>
</comment>
<protein>
    <recommendedName>
        <fullName>Pro-FMRFamide-related neuropeptide VF</fullName>
    </recommendedName>
    <alternativeName>
        <fullName evidence="3">FMRFamide-related peptides</fullName>
    </alternativeName>
    <component>
        <recommendedName>
            <fullName evidence="3">Neuropeptide NPSF</fullName>
        </recommendedName>
    </component>
    <component>
        <recommendedName>
            <fullName evidence="3">Neuropeptide RFRP-1</fullName>
        </recommendedName>
    </component>
    <component>
        <recommendedName>
            <fullName evidence="3">Neuropeptide RFRP-2</fullName>
        </recommendedName>
    </component>
    <component>
        <recommendedName>
            <fullName evidence="3">Neuropeptide NPVF</fullName>
        </recommendedName>
        <alternativeName>
            <fullName evidence="9 10">Neuropeptide RFRP-3</fullName>
        </alternativeName>
    </component>
</protein>
<feature type="signal peptide" evidence="4">
    <location>
        <begin position="1"/>
        <end position="21"/>
    </location>
</feature>
<feature type="propeptide" id="PRO_0000401173" evidence="4">
    <location>
        <begin position="22"/>
        <end position="57"/>
    </location>
</feature>
<feature type="peptide" id="PRO_0000401174" description="Neuropeptide NPSF" evidence="1">
    <location>
        <begin position="58"/>
        <end position="92"/>
    </location>
</feature>
<feature type="peptide" id="PRO_0000401175" description="Neuropeptide RFRP-1" evidence="4">
    <location>
        <begin position="81"/>
        <end position="92"/>
    </location>
</feature>
<feature type="propeptide" id="PRO_0000401176" evidence="4">
    <location>
        <begin position="95"/>
        <end position="99"/>
    </location>
</feature>
<feature type="peptide" id="PRO_0000401177" description="Neuropeptide RFRP-2" evidence="4">
    <location>
        <begin position="101"/>
        <end position="112"/>
    </location>
</feature>
<feature type="propeptide" id="PRO_0000401178" evidence="4">
    <location>
        <begin position="115"/>
        <end position="121"/>
    </location>
</feature>
<feature type="peptide" id="PRO_0000401179" description="Neuropeptide NPVF" evidence="3">
    <location>
        <begin position="124"/>
        <end position="131"/>
    </location>
</feature>
<feature type="propeptide" id="PRO_0000401180" evidence="4">
    <location>
        <begin position="134"/>
        <end position="196"/>
    </location>
</feature>
<feature type="modified residue" description="Phenylalanine amide" evidence="3">
    <location>
        <position position="92"/>
    </location>
</feature>
<feature type="modified residue" description="Phenylalanine amide" evidence="3">
    <location>
        <position position="131"/>
    </location>
</feature>
<feature type="sequence conflict" description="In Ref. 3; ACB87372." evidence="11" ref="3">
    <original>IPS</original>
    <variation>MPN</variation>
    <location>
        <begin position="32"/>
        <end position="34"/>
    </location>
</feature>
<feature type="sequence conflict" description="In Ref. 3; ACB87372." evidence="11" ref="3">
    <original>L</original>
    <variation>R</variation>
    <location>
        <position position="182"/>
    </location>
</feature>
<sequence>MEIISLKRFILLMLATSSLLTSNIFCTDESRIPSLYSKKNYDKYSEPRGDLGWEKERSLTFEEVKDWGPKIKMNTPAVNKMPPSAANLPLRFGRNMEEERSTRVMAHLPLRLGKNREDSLSRRVPNLPQRFGRTIAAKSITKTLSNLLQQSMHSPSTNGLLYSMTCRPQEIQNPGQKNLRRLGFQKIDDAELKQEK</sequence>
<proteinExistence type="evidence at transcript level"/>